<evidence type="ECO:0000255" key="1">
    <source>
        <dbReference type="HAMAP-Rule" id="MF_00170"/>
    </source>
</evidence>
<organism>
    <name type="scientific">Lactiplantibacillus plantarum (strain ATCC BAA-793 / NCIMB 8826 / WCFS1)</name>
    <name type="common">Lactobacillus plantarum</name>
    <dbReference type="NCBI Taxonomy" id="220668"/>
    <lineage>
        <taxon>Bacteria</taxon>
        <taxon>Bacillati</taxon>
        <taxon>Bacillota</taxon>
        <taxon>Bacilli</taxon>
        <taxon>Lactobacillales</taxon>
        <taxon>Lactobacillaceae</taxon>
        <taxon>Lactiplantibacillus</taxon>
    </lineage>
</organism>
<comment type="function">
    <text evidence="1">Catalyzes the reversible conversion of ribose-5-phosphate to ribulose 5-phosphate.</text>
</comment>
<comment type="catalytic activity">
    <reaction evidence="1">
        <text>aldehydo-D-ribose 5-phosphate = D-ribulose 5-phosphate</text>
        <dbReference type="Rhea" id="RHEA:14657"/>
        <dbReference type="ChEBI" id="CHEBI:58121"/>
        <dbReference type="ChEBI" id="CHEBI:58273"/>
        <dbReference type="EC" id="5.3.1.6"/>
    </reaction>
</comment>
<comment type="pathway">
    <text evidence="1">Carbohydrate degradation; pentose phosphate pathway; D-ribose 5-phosphate from D-ribulose 5-phosphate (non-oxidative stage): step 1/1.</text>
</comment>
<comment type="subunit">
    <text evidence="1">Homodimer.</text>
</comment>
<comment type="similarity">
    <text evidence="1">Belongs to the ribose 5-phosphate isomerase family.</text>
</comment>
<keyword id="KW-0413">Isomerase</keyword>
<keyword id="KW-1185">Reference proteome</keyword>
<name>RPIA_LACPL</name>
<reference key="1">
    <citation type="journal article" date="2003" name="Proc. Natl. Acad. Sci. U.S.A.">
        <title>Complete genome sequence of Lactobacillus plantarum WCFS1.</title>
        <authorList>
            <person name="Kleerebezem M."/>
            <person name="Boekhorst J."/>
            <person name="van Kranenburg R."/>
            <person name="Molenaar D."/>
            <person name="Kuipers O.P."/>
            <person name="Leer R."/>
            <person name="Tarchini R."/>
            <person name="Peters S.A."/>
            <person name="Sandbrink H.M."/>
            <person name="Fiers M.W.E.J."/>
            <person name="Stiekema W."/>
            <person name="Klein Lankhorst R.M."/>
            <person name="Bron P.A."/>
            <person name="Hoffer S.M."/>
            <person name="Nierop Groot M.N."/>
            <person name="Kerkhoven R."/>
            <person name="De Vries M."/>
            <person name="Ursing B."/>
            <person name="De Vos W.M."/>
            <person name="Siezen R.J."/>
        </authorList>
    </citation>
    <scope>NUCLEOTIDE SEQUENCE [LARGE SCALE GENOMIC DNA]</scope>
    <source>
        <strain>ATCC BAA-793 / NCIMB 8826 / WCFS1</strain>
    </source>
</reference>
<reference key="2">
    <citation type="journal article" date="2012" name="J. Bacteriol.">
        <title>Complete resequencing and reannotation of the Lactobacillus plantarum WCFS1 genome.</title>
        <authorList>
            <person name="Siezen R.J."/>
            <person name="Francke C."/>
            <person name="Renckens B."/>
            <person name="Boekhorst J."/>
            <person name="Wels M."/>
            <person name="Kleerebezem M."/>
            <person name="van Hijum S.A."/>
        </authorList>
    </citation>
    <scope>NUCLEOTIDE SEQUENCE [LARGE SCALE GENOMIC DNA]</scope>
    <scope>GENOME REANNOTATION</scope>
    <source>
        <strain>ATCC BAA-793 / NCIMB 8826 / WCFS1</strain>
    </source>
</reference>
<accession>Q88YY5</accession>
<accession>F9UL69</accession>
<feature type="chain" id="PRO_0000158428" description="Ribose-5-phosphate isomerase A">
    <location>
        <begin position="1"/>
        <end position="227"/>
    </location>
</feature>
<feature type="active site" description="Proton acceptor" evidence="1">
    <location>
        <position position="106"/>
    </location>
</feature>
<feature type="binding site" evidence="1">
    <location>
        <begin position="28"/>
        <end position="31"/>
    </location>
    <ligand>
        <name>substrate</name>
    </ligand>
</feature>
<feature type="binding site" evidence="1">
    <location>
        <begin position="84"/>
        <end position="87"/>
    </location>
    <ligand>
        <name>substrate</name>
    </ligand>
</feature>
<feature type="binding site" evidence="1">
    <location>
        <begin position="97"/>
        <end position="100"/>
    </location>
    <ligand>
        <name>substrate</name>
    </ligand>
</feature>
<feature type="binding site" evidence="1">
    <location>
        <position position="124"/>
    </location>
    <ligand>
        <name>substrate</name>
    </ligand>
</feature>
<sequence length="227" mass="24642">MNQDQLKQLVGQKAVEYIQDGMQVGLGTGSTVKFMVDALGERVKNEHLNIVGVSTSDRTAAQAKALGIPMKSVDEVDHLDLTIDGADEIADDFQGVKGGGAALLFEKIVAINSDKVMWIVDESKMVHQLGAFGLPVEVIPYGSQHVFEKMAARGYNPVFRKVNDELVRTDSNNIIIDLHIDPITDPHALAEDLIHMVGVVEHGLFLDMVNTVIVGHANGPEVIEARP</sequence>
<proteinExistence type="inferred from homology"/>
<gene>
    <name evidence="1" type="primary">rpiA</name>
    <name type="synonym">rpiA1</name>
    <name type="ordered locus">lp_0602</name>
</gene>
<dbReference type="EC" id="5.3.1.6" evidence="1"/>
<dbReference type="EMBL" id="AL935263">
    <property type="protein sequence ID" value="CCC78084.1"/>
    <property type="molecule type" value="Genomic_DNA"/>
</dbReference>
<dbReference type="RefSeq" id="WP_003640926.1">
    <property type="nucleotide sequence ID" value="NC_004567.2"/>
</dbReference>
<dbReference type="RefSeq" id="YP_004888598.1">
    <property type="nucleotide sequence ID" value="NC_004567.2"/>
</dbReference>
<dbReference type="SMR" id="Q88YY5"/>
<dbReference type="STRING" id="220668.lp_0602"/>
<dbReference type="EnsemblBacteria" id="CCC78084">
    <property type="protein sequence ID" value="CCC78084"/>
    <property type="gene ID" value="lp_0602"/>
</dbReference>
<dbReference type="GeneID" id="89668245"/>
<dbReference type="KEGG" id="lpl:lp_0602"/>
<dbReference type="PATRIC" id="fig|220668.9.peg.503"/>
<dbReference type="eggNOG" id="COG0120">
    <property type="taxonomic scope" value="Bacteria"/>
</dbReference>
<dbReference type="HOGENOM" id="CLU_056590_1_0_9"/>
<dbReference type="OrthoDB" id="5870696at2"/>
<dbReference type="PhylomeDB" id="Q88YY5"/>
<dbReference type="UniPathway" id="UPA00115">
    <property type="reaction ID" value="UER00412"/>
</dbReference>
<dbReference type="Proteomes" id="UP000000432">
    <property type="component" value="Chromosome"/>
</dbReference>
<dbReference type="GO" id="GO:0004751">
    <property type="term" value="F:ribose-5-phosphate isomerase activity"/>
    <property type="evidence" value="ECO:0007669"/>
    <property type="project" value="UniProtKB-UniRule"/>
</dbReference>
<dbReference type="GO" id="GO:0009052">
    <property type="term" value="P:pentose-phosphate shunt, non-oxidative branch"/>
    <property type="evidence" value="ECO:0007669"/>
    <property type="project" value="UniProtKB-UniRule"/>
</dbReference>
<dbReference type="CDD" id="cd01398">
    <property type="entry name" value="RPI_A"/>
    <property type="match status" value="1"/>
</dbReference>
<dbReference type="FunFam" id="3.40.50.1360:FF:000001">
    <property type="entry name" value="Ribose-5-phosphate isomerase A"/>
    <property type="match status" value="1"/>
</dbReference>
<dbReference type="Gene3D" id="3.30.70.260">
    <property type="match status" value="1"/>
</dbReference>
<dbReference type="Gene3D" id="3.40.50.1360">
    <property type="match status" value="1"/>
</dbReference>
<dbReference type="HAMAP" id="MF_00170">
    <property type="entry name" value="Rib_5P_isom_A"/>
    <property type="match status" value="1"/>
</dbReference>
<dbReference type="InterPro" id="IPR037171">
    <property type="entry name" value="NagB/RpiA_transferase-like"/>
</dbReference>
<dbReference type="InterPro" id="IPR050262">
    <property type="entry name" value="Ribose-5P_isomerase"/>
</dbReference>
<dbReference type="InterPro" id="IPR020672">
    <property type="entry name" value="Ribose5P_isomerase_typA_subgr"/>
</dbReference>
<dbReference type="InterPro" id="IPR004788">
    <property type="entry name" value="Ribose5P_isomerase_type_A"/>
</dbReference>
<dbReference type="NCBIfam" id="NF001924">
    <property type="entry name" value="PRK00702.1"/>
    <property type="match status" value="1"/>
</dbReference>
<dbReference type="NCBIfam" id="TIGR00021">
    <property type="entry name" value="rpiA"/>
    <property type="match status" value="1"/>
</dbReference>
<dbReference type="PANTHER" id="PTHR43748">
    <property type="entry name" value="RIBOSE-5-PHOSPHATE ISOMERASE 3, CHLOROPLASTIC-RELATED"/>
    <property type="match status" value="1"/>
</dbReference>
<dbReference type="PANTHER" id="PTHR43748:SF3">
    <property type="entry name" value="RIBOSE-5-PHOSPHATE ISOMERASE 3, CHLOROPLASTIC-RELATED"/>
    <property type="match status" value="1"/>
</dbReference>
<dbReference type="Pfam" id="PF06026">
    <property type="entry name" value="Rib_5-P_isom_A"/>
    <property type="match status" value="1"/>
</dbReference>
<dbReference type="SUPFAM" id="SSF75445">
    <property type="entry name" value="D-ribose-5-phosphate isomerase (RpiA), lid domain"/>
    <property type="match status" value="1"/>
</dbReference>
<dbReference type="SUPFAM" id="SSF100950">
    <property type="entry name" value="NagB/RpiA/CoA transferase-like"/>
    <property type="match status" value="1"/>
</dbReference>
<protein>
    <recommendedName>
        <fullName evidence="1">Ribose-5-phosphate isomerase A</fullName>
        <ecNumber evidence="1">5.3.1.6</ecNumber>
    </recommendedName>
    <alternativeName>
        <fullName evidence="1">Phosphoriboisomerase A</fullName>
        <shortName evidence="1">PRI</shortName>
    </alternativeName>
</protein>